<protein>
    <recommendedName>
        <fullName evidence="1">Phosphoserine aminotransferase</fullName>
        <ecNumber evidence="1">2.6.1.52</ecNumber>
    </recommendedName>
    <alternativeName>
        <fullName evidence="1">Phosphohydroxythreonine aminotransferase</fullName>
        <shortName evidence="1">PSAT</shortName>
    </alternativeName>
</protein>
<feature type="chain" id="PRO_1000097213" description="Phosphoserine aminotransferase">
    <location>
        <begin position="1"/>
        <end position="361"/>
    </location>
</feature>
<feature type="binding site" evidence="1">
    <location>
        <position position="43"/>
    </location>
    <ligand>
        <name>L-glutamate</name>
        <dbReference type="ChEBI" id="CHEBI:29985"/>
    </ligand>
</feature>
<feature type="binding site" evidence="1">
    <location>
        <begin position="77"/>
        <end position="78"/>
    </location>
    <ligand>
        <name>pyridoxal 5'-phosphate</name>
        <dbReference type="ChEBI" id="CHEBI:597326"/>
    </ligand>
</feature>
<feature type="binding site" evidence="1">
    <location>
        <position position="103"/>
    </location>
    <ligand>
        <name>pyridoxal 5'-phosphate</name>
        <dbReference type="ChEBI" id="CHEBI:597326"/>
    </ligand>
</feature>
<feature type="binding site" evidence="1">
    <location>
        <position position="152"/>
    </location>
    <ligand>
        <name>pyridoxal 5'-phosphate</name>
        <dbReference type="ChEBI" id="CHEBI:597326"/>
    </ligand>
</feature>
<feature type="binding site" evidence="1">
    <location>
        <position position="172"/>
    </location>
    <ligand>
        <name>pyridoxal 5'-phosphate</name>
        <dbReference type="ChEBI" id="CHEBI:597326"/>
    </ligand>
</feature>
<feature type="binding site" evidence="1">
    <location>
        <position position="195"/>
    </location>
    <ligand>
        <name>pyridoxal 5'-phosphate</name>
        <dbReference type="ChEBI" id="CHEBI:597326"/>
    </ligand>
</feature>
<feature type="binding site" evidence="1">
    <location>
        <begin position="237"/>
        <end position="238"/>
    </location>
    <ligand>
        <name>pyridoxal 5'-phosphate</name>
        <dbReference type="ChEBI" id="CHEBI:597326"/>
    </ligand>
</feature>
<feature type="modified residue" description="N6-(pyridoxal phosphate)lysine" evidence="1">
    <location>
        <position position="196"/>
    </location>
</feature>
<name>SERC_DESOH</name>
<evidence type="ECO:0000255" key="1">
    <source>
        <dbReference type="HAMAP-Rule" id="MF_00160"/>
    </source>
</evidence>
<organism>
    <name type="scientific">Desulfosudis oleivorans (strain DSM 6200 / JCM 39069 / Hxd3)</name>
    <name type="common">Desulfococcus oleovorans</name>
    <dbReference type="NCBI Taxonomy" id="96561"/>
    <lineage>
        <taxon>Bacteria</taxon>
        <taxon>Pseudomonadati</taxon>
        <taxon>Thermodesulfobacteriota</taxon>
        <taxon>Desulfobacteria</taxon>
        <taxon>Desulfobacterales</taxon>
        <taxon>Desulfosudaceae</taxon>
        <taxon>Desulfosudis</taxon>
    </lineage>
</organism>
<comment type="function">
    <text evidence="1">Catalyzes the reversible conversion of 3-phosphohydroxypyruvate to phosphoserine and of 3-hydroxy-2-oxo-4-phosphonooxybutanoate to phosphohydroxythreonine.</text>
</comment>
<comment type="catalytic activity">
    <reaction evidence="1">
        <text>O-phospho-L-serine + 2-oxoglutarate = 3-phosphooxypyruvate + L-glutamate</text>
        <dbReference type="Rhea" id="RHEA:14329"/>
        <dbReference type="ChEBI" id="CHEBI:16810"/>
        <dbReference type="ChEBI" id="CHEBI:18110"/>
        <dbReference type="ChEBI" id="CHEBI:29985"/>
        <dbReference type="ChEBI" id="CHEBI:57524"/>
        <dbReference type="EC" id="2.6.1.52"/>
    </reaction>
</comment>
<comment type="catalytic activity">
    <reaction evidence="1">
        <text>4-(phosphooxy)-L-threonine + 2-oxoglutarate = (R)-3-hydroxy-2-oxo-4-phosphooxybutanoate + L-glutamate</text>
        <dbReference type="Rhea" id="RHEA:16573"/>
        <dbReference type="ChEBI" id="CHEBI:16810"/>
        <dbReference type="ChEBI" id="CHEBI:29985"/>
        <dbReference type="ChEBI" id="CHEBI:58452"/>
        <dbReference type="ChEBI" id="CHEBI:58538"/>
        <dbReference type="EC" id="2.6.1.52"/>
    </reaction>
</comment>
<comment type="cofactor">
    <cofactor evidence="1">
        <name>pyridoxal 5'-phosphate</name>
        <dbReference type="ChEBI" id="CHEBI:597326"/>
    </cofactor>
    <text evidence="1">Binds 1 pyridoxal phosphate per subunit.</text>
</comment>
<comment type="pathway">
    <text evidence="1">Amino-acid biosynthesis; L-serine biosynthesis; L-serine from 3-phospho-D-glycerate: step 2/3.</text>
</comment>
<comment type="pathway">
    <text evidence="1">Cofactor biosynthesis; pyridoxine 5'-phosphate biosynthesis; pyridoxine 5'-phosphate from D-erythrose 4-phosphate: step 3/5.</text>
</comment>
<comment type="subunit">
    <text evidence="1">Homodimer.</text>
</comment>
<comment type="subcellular location">
    <subcellularLocation>
        <location evidence="1">Cytoplasm</location>
    </subcellularLocation>
</comment>
<comment type="similarity">
    <text evidence="1">Belongs to the class-V pyridoxal-phosphate-dependent aminotransferase family. SerC subfamily.</text>
</comment>
<reference key="1">
    <citation type="submission" date="2007-10" db="EMBL/GenBank/DDBJ databases">
        <title>Complete sequence of Desulfococcus oleovorans Hxd3.</title>
        <authorList>
            <consortium name="US DOE Joint Genome Institute"/>
            <person name="Copeland A."/>
            <person name="Lucas S."/>
            <person name="Lapidus A."/>
            <person name="Barry K."/>
            <person name="Glavina del Rio T."/>
            <person name="Dalin E."/>
            <person name="Tice H."/>
            <person name="Pitluck S."/>
            <person name="Kiss H."/>
            <person name="Brettin T."/>
            <person name="Bruce D."/>
            <person name="Detter J.C."/>
            <person name="Han C."/>
            <person name="Schmutz J."/>
            <person name="Larimer F."/>
            <person name="Land M."/>
            <person name="Hauser L."/>
            <person name="Kyrpides N."/>
            <person name="Kim E."/>
            <person name="Wawrik B."/>
            <person name="Richardson P."/>
        </authorList>
    </citation>
    <scope>NUCLEOTIDE SEQUENCE [LARGE SCALE GENOMIC DNA]</scope>
    <source>
        <strain>DSM 6200 / JCM 39069 / Hxd3</strain>
    </source>
</reference>
<accession>A9A0A5</accession>
<dbReference type="EC" id="2.6.1.52" evidence="1"/>
<dbReference type="EMBL" id="CP000859">
    <property type="protein sequence ID" value="ABW69024.1"/>
    <property type="molecule type" value="Genomic_DNA"/>
</dbReference>
<dbReference type="RefSeq" id="WP_012176634.1">
    <property type="nucleotide sequence ID" value="NC_009943.1"/>
</dbReference>
<dbReference type="SMR" id="A9A0A5"/>
<dbReference type="STRING" id="96561.Dole_3221"/>
<dbReference type="KEGG" id="dol:Dole_3221"/>
<dbReference type="eggNOG" id="COG1932">
    <property type="taxonomic scope" value="Bacteria"/>
</dbReference>
<dbReference type="HOGENOM" id="CLU_034866_0_2_7"/>
<dbReference type="OrthoDB" id="9809412at2"/>
<dbReference type="UniPathway" id="UPA00135">
    <property type="reaction ID" value="UER00197"/>
</dbReference>
<dbReference type="UniPathway" id="UPA00244">
    <property type="reaction ID" value="UER00311"/>
</dbReference>
<dbReference type="Proteomes" id="UP000008561">
    <property type="component" value="Chromosome"/>
</dbReference>
<dbReference type="GO" id="GO:0005737">
    <property type="term" value="C:cytoplasm"/>
    <property type="evidence" value="ECO:0007669"/>
    <property type="project" value="UniProtKB-SubCell"/>
</dbReference>
<dbReference type="GO" id="GO:0004648">
    <property type="term" value="F:O-phospho-L-serine:2-oxoglutarate aminotransferase activity"/>
    <property type="evidence" value="ECO:0007669"/>
    <property type="project" value="UniProtKB-UniRule"/>
</dbReference>
<dbReference type="GO" id="GO:0030170">
    <property type="term" value="F:pyridoxal phosphate binding"/>
    <property type="evidence" value="ECO:0007669"/>
    <property type="project" value="UniProtKB-UniRule"/>
</dbReference>
<dbReference type="GO" id="GO:0006564">
    <property type="term" value="P:L-serine biosynthetic process"/>
    <property type="evidence" value="ECO:0007669"/>
    <property type="project" value="UniProtKB-UniRule"/>
</dbReference>
<dbReference type="GO" id="GO:0008615">
    <property type="term" value="P:pyridoxine biosynthetic process"/>
    <property type="evidence" value="ECO:0007669"/>
    <property type="project" value="UniProtKB-UniRule"/>
</dbReference>
<dbReference type="CDD" id="cd00611">
    <property type="entry name" value="PSAT_like"/>
    <property type="match status" value="1"/>
</dbReference>
<dbReference type="FunFam" id="3.40.640.10:FF:000010">
    <property type="entry name" value="Phosphoserine aminotransferase"/>
    <property type="match status" value="1"/>
</dbReference>
<dbReference type="FunFam" id="3.90.1150.10:FF:000006">
    <property type="entry name" value="Phosphoserine aminotransferase"/>
    <property type="match status" value="1"/>
</dbReference>
<dbReference type="Gene3D" id="3.90.1150.10">
    <property type="entry name" value="Aspartate Aminotransferase, domain 1"/>
    <property type="match status" value="1"/>
</dbReference>
<dbReference type="Gene3D" id="3.40.640.10">
    <property type="entry name" value="Type I PLP-dependent aspartate aminotransferase-like (Major domain)"/>
    <property type="match status" value="1"/>
</dbReference>
<dbReference type="HAMAP" id="MF_00160">
    <property type="entry name" value="SerC_aminotrans_5"/>
    <property type="match status" value="1"/>
</dbReference>
<dbReference type="InterPro" id="IPR000192">
    <property type="entry name" value="Aminotrans_V_dom"/>
</dbReference>
<dbReference type="InterPro" id="IPR022278">
    <property type="entry name" value="Pser_aminoTfrase"/>
</dbReference>
<dbReference type="InterPro" id="IPR015424">
    <property type="entry name" value="PyrdxlP-dep_Trfase"/>
</dbReference>
<dbReference type="InterPro" id="IPR015421">
    <property type="entry name" value="PyrdxlP-dep_Trfase_major"/>
</dbReference>
<dbReference type="InterPro" id="IPR015422">
    <property type="entry name" value="PyrdxlP-dep_Trfase_small"/>
</dbReference>
<dbReference type="NCBIfam" id="NF003764">
    <property type="entry name" value="PRK05355.1"/>
    <property type="match status" value="1"/>
</dbReference>
<dbReference type="NCBIfam" id="TIGR01364">
    <property type="entry name" value="serC_1"/>
    <property type="match status" value="1"/>
</dbReference>
<dbReference type="PANTHER" id="PTHR43247">
    <property type="entry name" value="PHOSPHOSERINE AMINOTRANSFERASE"/>
    <property type="match status" value="1"/>
</dbReference>
<dbReference type="PANTHER" id="PTHR43247:SF1">
    <property type="entry name" value="PHOSPHOSERINE AMINOTRANSFERASE"/>
    <property type="match status" value="1"/>
</dbReference>
<dbReference type="Pfam" id="PF00266">
    <property type="entry name" value="Aminotran_5"/>
    <property type="match status" value="1"/>
</dbReference>
<dbReference type="PIRSF" id="PIRSF000525">
    <property type="entry name" value="SerC"/>
    <property type="match status" value="1"/>
</dbReference>
<dbReference type="SUPFAM" id="SSF53383">
    <property type="entry name" value="PLP-dependent transferases"/>
    <property type="match status" value="1"/>
</dbReference>
<sequence>MSKRIYNFNPGPAALPLSVLEEIQATFLDFAGTGMSITEVSHRSKPFDAIINDAVTRVKRLLGIGDDFKVLFVQGGASMQFAMVPMNLLPDGKSADYVNTGTWSTKAIKETKILGKTVNVAASSEDRNFAYIPKELSLDPNAAYVHITSNNTIKGTQWADFPDTKGVPIVSDMSSDILSRPLDMSKFGLIYAGAQKNIGPAGVCMVIVKNDLLEKANTGLPSMLAYKTYADSNSLYNTPPCFTIYAIDLVLKWLEETIGGLEKMDAVNREKAALLYDLFDASSFYNGTADADSRSLMNVTFRLPSEDLEKRFVEEATKNDLGGLKGHRSVGGCRASIYNAMSMEGIQALVDFMKEFERTNG</sequence>
<proteinExistence type="inferred from homology"/>
<keyword id="KW-0028">Amino-acid biosynthesis</keyword>
<keyword id="KW-0032">Aminotransferase</keyword>
<keyword id="KW-0963">Cytoplasm</keyword>
<keyword id="KW-0663">Pyridoxal phosphate</keyword>
<keyword id="KW-0664">Pyridoxine biosynthesis</keyword>
<keyword id="KW-1185">Reference proteome</keyword>
<keyword id="KW-0718">Serine biosynthesis</keyword>
<keyword id="KW-0808">Transferase</keyword>
<gene>
    <name evidence="1" type="primary">serC</name>
    <name type="ordered locus">Dole_3221</name>
</gene>